<dbReference type="EC" id="6.1.1.17" evidence="1"/>
<dbReference type="EMBL" id="CP000413">
    <property type="protein sequence ID" value="ABJ59743.1"/>
    <property type="molecule type" value="Genomic_DNA"/>
</dbReference>
<dbReference type="RefSeq" id="WP_003647793.1">
    <property type="nucleotide sequence ID" value="NZ_WBMG01000001.1"/>
</dbReference>
<dbReference type="SMR" id="Q045X9"/>
<dbReference type="GeneID" id="29639343"/>
<dbReference type="KEGG" id="lga:LGAS_0337"/>
<dbReference type="HOGENOM" id="CLU_015768_6_1_9"/>
<dbReference type="BioCyc" id="LGAS324831:G1G6Y-336-MONOMER"/>
<dbReference type="Proteomes" id="UP000000664">
    <property type="component" value="Chromosome"/>
</dbReference>
<dbReference type="GO" id="GO:0005829">
    <property type="term" value="C:cytosol"/>
    <property type="evidence" value="ECO:0007669"/>
    <property type="project" value="TreeGrafter"/>
</dbReference>
<dbReference type="GO" id="GO:0005524">
    <property type="term" value="F:ATP binding"/>
    <property type="evidence" value="ECO:0007669"/>
    <property type="project" value="UniProtKB-UniRule"/>
</dbReference>
<dbReference type="GO" id="GO:0004818">
    <property type="term" value="F:glutamate-tRNA ligase activity"/>
    <property type="evidence" value="ECO:0007669"/>
    <property type="project" value="UniProtKB-UniRule"/>
</dbReference>
<dbReference type="GO" id="GO:0000049">
    <property type="term" value="F:tRNA binding"/>
    <property type="evidence" value="ECO:0007669"/>
    <property type="project" value="InterPro"/>
</dbReference>
<dbReference type="GO" id="GO:0008270">
    <property type="term" value="F:zinc ion binding"/>
    <property type="evidence" value="ECO:0007669"/>
    <property type="project" value="InterPro"/>
</dbReference>
<dbReference type="GO" id="GO:0006424">
    <property type="term" value="P:glutamyl-tRNA aminoacylation"/>
    <property type="evidence" value="ECO:0007669"/>
    <property type="project" value="UniProtKB-UniRule"/>
</dbReference>
<dbReference type="CDD" id="cd00808">
    <property type="entry name" value="GluRS_core"/>
    <property type="match status" value="1"/>
</dbReference>
<dbReference type="FunFam" id="3.40.50.620:FF:000007">
    <property type="entry name" value="Glutamate--tRNA ligase"/>
    <property type="match status" value="1"/>
</dbReference>
<dbReference type="Gene3D" id="1.10.10.350">
    <property type="match status" value="1"/>
</dbReference>
<dbReference type="Gene3D" id="3.40.50.620">
    <property type="entry name" value="HUPs"/>
    <property type="match status" value="1"/>
</dbReference>
<dbReference type="HAMAP" id="MF_00022">
    <property type="entry name" value="Glu_tRNA_synth_type1"/>
    <property type="match status" value="1"/>
</dbReference>
<dbReference type="InterPro" id="IPR045462">
    <property type="entry name" value="aa-tRNA-synth_I_cd-bd"/>
</dbReference>
<dbReference type="InterPro" id="IPR020751">
    <property type="entry name" value="aa-tRNA-synth_I_codon-bd_sub2"/>
</dbReference>
<dbReference type="InterPro" id="IPR001412">
    <property type="entry name" value="aa-tRNA-synth_I_CS"/>
</dbReference>
<dbReference type="InterPro" id="IPR008925">
    <property type="entry name" value="aa_tRNA-synth_I_cd-bd_sf"/>
</dbReference>
<dbReference type="InterPro" id="IPR004527">
    <property type="entry name" value="Glu-tRNA-ligase_bac/mito"/>
</dbReference>
<dbReference type="InterPro" id="IPR000924">
    <property type="entry name" value="Glu/Gln-tRNA-synth"/>
</dbReference>
<dbReference type="InterPro" id="IPR020058">
    <property type="entry name" value="Glu/Gln-tRNA-synth_Ib_cat-dom"/>
</dbReference>
<dbReference type="InterPro" id="IPR049940">
    <property type="entry name" value="GluQ/Sye"/>
</dbReference>
<dbReference type="InterPro" id="IPR033910">
    <property type="entry name" value="GluRS_core"/>
</dbReference>
<dbReference type="InterPro" id="IPR014729">
    <property type="entry name" value="Rossmann-like_a/b/a_fold"/>
</dbReference>
<dbReference type="NCBIfam" id="TIGR00464">
    <property type="entry name" value="gltX_bact"/>
    <property type="match status" value="1"/>
</dbReference>
<dbReference type="PANTHER" id="PTHR43311">
    <property type="entry name" value="GLUTAMATE--TRNA LIGASE"/>
    <property type="match status" value="1"/>
</dbReference>
<dbReference type="PANTHER" id="PTHR43311:SF2">
    <property type="entry name" value="GLUTAMATE--TRNA LIGASE, MITOCHONDRIAL-RELATED"/>
    <property type="match status" value="1"/>
</dbReference>
<dbReference type="Pfam" id="PF19269">
    <property type="entry name" value="Anticodon_2"/>
    <property type="match status" value="1"/>
</dbReference>
<dbReference type="Pfam" id="PF00749">
    <property type="entry name" value="tRNA-synt_1c"/>
    <property type="match status" value="1"/>
</dbReference>
<dbReference type="PRINTS" id="PR00987">
    <property type="entry name" value="TRNASYNTHGLU"/>
</dbReference>
<dbReference type="SUPFAM" id="SSF48163">
    <property type="entry name" value="An anticodon-binding domain of class I aminoacyl-tRNA synthetases"/>
    <property type="match status" value="1"/>
</dbReference>
<dbReference type="SUPFAM" id="SSF52374">
    <property type="entry name" value="Nucleotidylyl transferase"/>
    <property type="match status" value="1"/>
</dbReference>
<dbReference type="PROSITE" id="PS00178">
    <property type="entry name" value="AA_TRNA_LIGASE_I"/>
    <property type="match status" value="1"/>
</dbReference>
<reference key="1">
    <citation type="journal article" date="2006" name="Proc. Natl. Acad. Sci. U.S.A.">
        <title>Comparative genomics of the lactic acid bacteria.</title>
        <authorList>
            <person name="Makarova K.S."/>
            <person name="Slesarev A."/>
            <person name="Wolf Y.I."/>
            <person name="Sorokin A."/>
            <person name="Mirkin B."/>
            <person name="Koonin E.V."/>
            <person name="Pavlov A."/>
            <person name="Pavlova N."/>
            <person name="Karamychev V."/>
            <person name="Polouchine N."/>
            <person name="Shakhova V."/>
            <person name="Grigoriev I."/>
            <person name="Lou Y."/>
            <person name="Rohksar D."/>
            <person name="Lucas S."/>
            <person name="Huang K."/>
            <person name="Goodstein D.M."/>
            <person name="Hawkins T."/>
            <person name="Plengvidhya V."/>
            <person name="Welker D."/>
            <person name="Hughes J."/>
            <person name="Goh Y."/>
            <person name="Benson A."/>
            <person name="Baldwin K."/>
            <person name="Lee J.-H."/>
            <person name="Diaz-Muniz I."/>
            <person name="Dosti B."/>
            <person name="Smeianov V."/>
            <person name="Wechter W."/>
            <person name="Barabote R."/>
            <person name="Lorca G."/>
            <person name="Altermann E."/>
            <person name="Barrangou R."/>
            <person name="Ganesan B."/>
            <person name="Xie Y."/>
            <person name="Rawsthorne H."/>
            <person name="Tamir D."/>
            <person name="Parker C."/>
            <person name="Breidt F."/>
            <person name="Broadbent J.R."/>
            <person name="Hutkins R."/>
            <person name="O'Sullivan D."/>
            <person name="Steele J."/>
            <person name="Unlu G."/>
            <person name="Saier M.H. Jr."/>
            <person name="Klaenhammer T."/>
            <person name="Richardson P."/>
            <person name="Kozyavkin S."/>
            <person name="Weimer B.C."/>
            <person name="Mills D.A."/>
        </authorList>
    </citation>
    <scope>NUCLEOTIDE SEQUENCE [LARGE SCALE GENOMIC DNA]</scope>
    <source>
        <strain>ATCC 33323 / DSM 20243 / BCRC 14619 / CIP 102991 / JCM 1131 / KCTC 3163 / NCIMB 11718 / NCTC 13722 / AM63</strain>
    </source>
</reference>
<sequence>MAKQKIRVRYAPSPTGHLHIGNARTALFNYLFARHNKGTMVLRIEDTDQKRNVEGGSKSQMENLHWLGIDWDEGPDKGGDFGPYRQSERKDIYNKYIKQLIDEGKAYYSYKTEEELEAQREEQRAMGIAPHYTYEYEGMTADEIKQAQADAEAKGLKPVVRIHIPENRTYAWDDMVKGKVSFESDTIGGDFVIQKRDGMPTYNFAVVIDDHLMEITHVLRGDDHVANTPKQLVVYEALGWEPPKFGHMTLIINSETGKKLSKRDESVLQFIEQYRDLGYLPEAMFNFITLLGWSPVGESEIFSQRELIKSFDPKRLSKSPAAFDQKKLEWINNQYVKKADRDVLLDLALNNLQEAGLVGKEVSPEKMEWVRQLVNIYAVQMSYTKQIVDITKIFFEEAPELSDAEVEEIKKDDARPVIEEFKKQLNAIPRFTAVQVMNAIQATRRETGVKGRKLFMPIRIAATRSMVGPGIGEAIELMGKEKVNKHIDLTLKQLSDLGL</sequence>
<gene>
    <name evidence="1" type="primary">gltX</name>
    <name type="ordered locus">LGAS_0337</name>
</gene>
<proteinExistence type="inferred from homology"/>
<feature type="chain" id="PRO_0000367698" description="Glutamate--tRNA ligase">
    <location>
        <begin position="1"/>
        <end position="499"/>
    </location>
</feature>
<feature type="short sequence motif" description="'HIGH' region" evidence="1">
    <location>
        <begin position="12"/>
        <end position="22"/>
    </location>
</feature>
<feature type="short sequence motif" description="'KMSKS' region" evidence="1">
    <location>
        <begin position="259"/>
        <end position="263"/>
    </location>
</feature>
<feature type="binding site" evidence="1">
    <location>
        <position position="262"/>
    </location>
    <ligand>
        <name>ATP</name>
        <dbReference type="ChEBI" id="CHEBI:30616"/>
    </ligand>
</feature>
<protein>
    <recommendedName>
        <fullName evidence="1">Glutamate--tRNA ligase</fullName>
        <ecNumber evidence="1">6.1.1.17</ecNumber>
    </recommendedName>
    <alternativeName>
        <fullName evidence="1">Glutamyl-tRNA synthetase</fullName>
        <shortName evidence="1">GluRS</shortName>
    </alternativeName>
</protein>
<name>SYE_LACGA</name>
<organism>
    <name type="scientific">Lactobacillus gasseri (strain ATCC 33323 / DSM 20243 / BCRC 14619 / CIP 102991 / JCM 1131 / KCTC 3163 / NCIMB 11718 / NCTC 13722 / AM63)</name>
    <dbReference type="NCBI Taxonomy" id="324831"/>
    <lineage>
        <taxon>Bacteria</taxon>
        <taxon>Bacillati</taxon>
        <taxon>Bacillota</taxon>
        <taxon>Bacilli</taxon>
        <taxon>Lactobacillales</taxon>
        <taxon>Lactobacillaceae</taxon>
        <taxon>Lactobacillus</taxon>
    </lineage>
</organism>
<accession>Q045X9</accession>
<comment type="function">
    <text evidence="1">Catalyzes the attachment of glutamate to tRNA(Glu) in a two-step reaction: glutamate is first activated by ATP to form Glu-AMP and then transferred to the acceptor end of tRNA(Glu).</text>
</comment>
<comment type="catalytic activity">
    <reaction evidence="1">
        <text>tRNA(Glu) + L-glutamate + ATP = L-glutamyl-tRNA(Glu) + AMP + diphosphate</text>
        <dbReference type="Rhea" id="RHEA:23540"/>
        <dbReference type="Rhea" id="RHEA-COMP:9663"/>
        <dbReference type="Rhea" id="RHEA-COMP:9680"/>
        <dbReference type="ChEBI" id="CHEBI:29985"/>
        <dbReference type="ChEBI" id="CHEBI:30616"/>
        <dbReference type="ChEBI" id="CHEBI:33019"/>
        <dbReference type="ChEBI" id="CHEBI:78442"/>
        <dbReference type="ChEBI" id="CHEBI:78520"/>
        <dbReference type="ChEBI" id="CHEBI:456215"/>
        <dbReference type="EC" id="6.1.1.17"/>
    </reaction>
</comment>
<comment type="subunit">
    <text evidence="1">Monomer.</text>
</comment>
<comment type="subcellular location">
    <subcellularLocation>
        <location evidence="1">Cytoplasm</location>
    </subcellularLocation>
</comment>
<comment type="similarity">
    <text evidence="1">Belongs to the class-I aminoacyl-tRNA synthetase family. Glutamate--tRNA ligase type 1 subfamily.</text>
</comment>
<evidence type="ECO:0000255" key="1">
    <source>
        <dbReference type="HAMAP-Rule" id="MF_00022"/>
    </source>
</evidence>
<keyword id="KW-0030">Aminoacyl-tRNA synthetase</keyword>
<keyword id="KW-0067">ATP-binding</keyword>
<keyword id="KW-0963">Cytoplasm</keyword>
<keyword id="KW-0436">Ligase</keyword>
<keyword id="KW-0547">Nucleotide-binding</keyword>
<keyword id="KW-0648">Protein biosynthesis</keyword>